<feature type="chain" id="PRO_0000200338" description="Cytochrome b559 subunit alpha">
    <location>
        <begin position="1"/>
        <end position="83"/>
    </location>
</feature>
<feature type="transmembrane region" description="Helical" evidence="1">
    <location>
        <begin position="21"/>
        <end position="35"/>
    </location>
</feature>
<feature type="binding site" description="axial binding residue" evidence="1">
    <location>
        <position position="23"/>
    </location>
    <ligand>
        <name>heme</name>
        <dbReference type="ChEBI" id="CHEBI:30413"/>
        <note>ligand shared with beta subunit</note>
    </ligand>
    <ligandPart>
        <name>Fe</name>
        <dbReference type="ChEBI" id="CHEBI:18248"/>
    </ligandPart>
</feature>
<geneLocation type="chloroplast"/>
<comment type="function">
    <text evidence="1">This b-type cytochrome is tightly associated with the reaction center of photosystem II (PSII). PSII is a light-driven water:plastoquinone oxidoreductase that uses light energy to abstract electrons from H(2)O, generating O(2) and a proton gradient subsequently used for ATP formation. It consists of a core antenna complex that captures photons, and an electron transfer chain that converts photonic excitation into a charge separation.</text>
</comment>
<comment type="cofactor">
    <cofactor evidence="1">
        <name>heme b</name>
        <dbReference type="ChEBI" id="CHEBI:60344"/>
    </cofactor>
    <text evidence="1">With its partner (PsbF) binds heme. PSII binds additional chlorophylls, carotenoids and specific lipids.</text>
</comment>
<comment type="subunit">
    <text evidence="1">Heterodimer of an alpha subunit and a beta subunit. PSII is composed of 1 copy each of membrane proteins PsbA, PsbB, PsbC, PsbD, PsbE, PsbF, PsbH, PsbI, PsbJ, PsbK, PsbL, PsbM, PsbT, PsbX, PsbY, PsbZ, Psb30/Ycf12, at least 3 peripheral proteins of the oxygen-evolving complex and a large number of cofactors. It forms dimeric complexes.</text>
</comment>
<comment type="subcellular location">
    <subcellularLocation>
        <location evidence="1">Plastid</location>
        <location evidence="1">Chloroplast thylakoid membrane</location>
        <topology evidence="1">Single-pass membrane protein</topology>
    </subcellularLocation>
</comment>
<comment type="similarity">
    <text evidence="1">Belongs to the PsbE/PsbF family.</text>
</comment>
<name>PSBE_SECCE</name>
<gene>
    <name evidence="1" type="primary">psbE</name>
</gene>
<dbReference type="EMBL" id="X13326">
    <property type="protein sequence ID" value="CAA31698.1"/>
    <property type="molecule type" value="Genomic_DNA"/>
</dbReference>
<dbReference type="PIR" id="S03191">
    <property type="entry name" value="S03191"/>
</dbReference>
<dbReference type="RefSeq" id="YP_008239188.1">
    <property type="nucleotide sequence ID" value="NC_021761.1"/>
</dbReference>
<dbReference type="SMR" id="P69387"/>
<dbReference type="EnsemblPlants" id="SECCE5Rv1G0313550.1">
    <property type="protein sequence ID" value="SECCE5Rv1G0313550.1.CDS.1"/>
    <property type="gene ID" value="SECCE5Rv1G0313550"/>
</dbReference>
<dbReference type="EnsemblPlants" id="SECCE5Rv1G0351220.1">
    <property type="protein sequence ID" value="SECCE5Rv1G0351220.1.CDS.1"/>
    <property type="gene ID" value="SECCE5Rv1G0351220"/>
</dbReference>
<dbReference type="EnsemblPlants" id="SECCEUnv1G0551160.1">
    <property type="protein sequence ID" value="SECCEUnv1G0551160.1.CDS.1"/>
    <property type="gene ID" value="SECCEUnv1G0551160"/>
</dbReference>
<dbReference type="EnsemblPlants" id="SECCEUnv1G0556320.1">
    <property type="protein sequence ID" value="SECCEUnv1G0556320.1.CDS.1"/>
    <property type="gene ID" value="SECCEUnv1G0556320"/>
</dbReference>
<dbReference type="GeneID" id="16792716"/>
<dbReference type="Gramene" id="SECCE5Rv1G0313550.1">
    <property type="protein sequence ID" value="SECCE5Rv1G0313550.1.CDS.1"/>
    <property type="gene ID" value="SECCE5Rv1G0313550"/>
</dbReference>
<dbReference type="Gramene" id="SECCE5Rv1G0351220.1">
    <property type="protein sequence ID" value="SECCE5Rv1G0351220.1.CDS.1"/>
    <property type="gene ID" value="SECCE5Rv1G0351220"/>
</dbReference>
<dbReference type="Gramene" id="SECCEUnv1G0551160.1">
    <property type="protein sequence ID" value="SECCEUnv1G0551160.1.CDS.1"/>
    <property type="gene ID" value="SECCEUnv1G0551160"/>
</dbReference>
<dbReference type="Gramene" id="SECCEUnv1G0556320.1">
    <property type="protein sequence ID" value="SECCEUnv1G0556320.1.CDS.1"/>
    <property type="gene ID" value="SECCEUnv1G0556320"/>
</dbReference>
<dbReference type="GO" id="GO:0009535">
    <property type="term" value="C:chloroplast thylakoid membrane"/>
    <property type="evidence" value="ECO:0007669"/>
    <property type="project" value="UniProtKB-SubCell"/>
</dbReference>
<dbReference type="GO" id="GO:0009539">
    <property type="term" value="C:photosystem II reaction center"/>
    <property type="evidence" value="ECO:0007669"/>
    <property type="project" value="InterPro"/>
</dbReference>
<dbReference type="GO" id="GO:0009055">
    <property type="term" value="F:electron transfer activity"/>
    <property type="evidence" value="ECO:0007669"/>
    <property type="project" value="UniProtKB-UniRule"/>
</dbReference>
<dbReference type="GO" id="GO:0020037">
    <property type="term" value="F:heme binding"/>
    <property type="evidence" value="ECO:0007669"/>
    <property type="project" value="InterPro"/>
</dbReference>
<dbReference type="GO" id="GO:0005506">
    <property type="term" value="F:iron ion binding"/>
    <property type="evidence" value="ECO:0007669"/>
    <property type="project" value="UniProtKB-UniRule"/>
</dbReference>
<dbReference type="GO" id="GO:0009767">
    <property type="term" value="P:photosynthetic electron transport chain"/>
    <property type="evidence" value="ECO:0007669"/>
    <property type="project" value="InterPro"/>
</dbReference>
<dbReference type="Gene3D" id="1.20.5.860">
    <property type="entry name" value="Photosystem II cytochrome b559, alpha subunit"/>
    <property type="match status" value="1"/>
</dbReference>
<dbReference type="HAMAP" id="MF_00642">
    <property type="entry name" value="PSII_PsbE"/>
    <property type="match status" value="1"/>
</dbReference>
<dbReference type="InterPro" id="IPR006217">
    <property type="entry name" value="PSII_cyt_b559_asu"/>
</dbReference>
<dbReference type="InterPro" id="IPR037025">
    <property type="entry name" value="PSII_cyt_b559_asu_sf"/>
</dbReference>
<dbReference type="InterPro" id="IPR006216">
    <property type="entry name" value="PSII_cyt_b559_CS"/>
</dbReference>
<dbReference type="InterPro" id="IPR013081">
    <property type="entry name" value="PSII_cyt_b559_N"/>
</dbReference>
<dbReference type="InterPro" id="IPR013082">
    <property type="entry name" value="PSII_cytb559_asu_lum"/>
</dbReference>
<dbReference type="NCBIfam" id="TIGR01332">
    <property type="entry name" value="cyt_b559_alpha"/>
    <property type="match status" value="1"/>
</dbReference>
<dbReference type="PANTHER" id="PTHR33391:SF13">
    <property type="entry name" value="CYTOCHROME B559 SUBUNIT ALPHA"/>
    <property type="match status" value="1"/>
</dbReference>
<dbReference type="PANTHER" id="PTHR33391">
    <property type="entry name" value="CYTOCHROME B559 SUBUNIT BETA-RELATED"/>
    <property type="match status" value="1"/>
</dbReference>
<dbReference type="Pfam" id="PF00283">
    <property type="entry name" value="Cytochrom_B559"/>
    <property type="match status" value="1"/>
</dbReference>
<dbReference type="Pfam" id="PF00284">
    <property type="entry name" value="Cytochrom_B559a"/>
    <property type="match status" value="1"/>
</dbReference>
<dbReference type="PIRSF" id="PIRSF000036">
    <property type="entry name" value="PsbE"/>
    <property type="match status" value="1"/>
</dbReference>
<dbReference type="SUPFAM" id="SSF161045">
    <property type="entry name" value="Cytochrome b559 subunits"/>
    <property type="match status" value="1"/>
</dbReference>
<dbReference type="PROSITE" id="PS00537">
    <property type="entry name" value="CYTOCHROME_B559"/>
    <property type="match status" value="1"/>
</dbReference>
<reference key="1">
    <citation type="journal article" date="1989" name="Nucleic Acids Res.">
        <title>Nucleotide sequence of the rye chloroplast DNA fragment, comprising psbE and psbF genes.</title>
        <authorList>
            <person name="Zolotarev A.S."/>
            <person name="Kolosov V.L."/>
        </authorList>
    </citation>
    <scope>NUCLEOTIDE SEQUENCE [GENOMIC DNA]</scope>
</reference>
<keyword id="KW-0150">Chloroplast</keyword>
<keyword id="KW-0249">Electron transport</keyword>
<keyword id="KW-0349">Heme</keyword>
<keyword id="KW-0408">Iron</keyword>
<keyword id="KW-0472">Membrane</keyword>
<keyword id="KW-0479">Metal-binding</keyword>
<keyword id="KW-0602">Photosynthesis</keyword>
<keyword id="KW-0604">Photosystem II</keyword>
<keyword id="KW-0934">Plastid</keyword>
<keyword id="KW-0793">Thylakoid</keyword>
<keyword id="KW-0812">Transmembrane</keyword>
<keyword id="KW-1133">Transmembrane helix</keyword>
<keyword id="KW-0813">Transport</keyword>
<organism>
    <name type="scientific">Secale cereale</name>
    <name type="common">Rye</name>
    <dbReference type="NCBI Taxonomy" id="4550"/>
    <lineage>
        <taxon>Eukaryota</taxon>
        <taxon>Viridiplantae</taxon>
        <taxon>Streptophyta</taxon>
        <taxon>Embryophyta</taxon>
        <taxon>Tracheophyta</taxon>
        <taxon>Spermatophyta</taxon>
        <taxon>Magnoliopsida</taxon>
        <taxon>Liliopsida</taxon>
        <taxon>Poales</taxon>
        <taxon>Poaceae</taxon>
        <taxon>BOP clade</taxon>
        <taxon>Pooideae</taxon>
        <taxon>Triticodae</taxon>
        <taxon>Triticeae</taxon>
        <taxon>Hordeinae</taxon>
        <taxon>Secale</taxon>
    </lineage>
</organism>
<evidence type="ECO:0000255" key="1">
    <source>
        <dbReference type="HAMAP-Rule" id="MF_00642"/>
    </source>
</evidence>
<protein>
    <recommendedName>
        <fullName evidence="1">Cytochrome b559 subunit alpha</fullName>
    </recommendedName>
    <alternativeName>
        <fullName evidence="1">PSII reaction center subunit V</fullName>
    </alternativeName>
</protein>
<accession>P69387</accession>
<accession>P05169</accession>
<accession>P10879</accession>
<accession>Q95H57</accession>
<proteinExistence type="inferred from homology"/>
<sequence length="83" mass="9445">MSGSTGERSFADIITSIRYWVIHSITIPSLFIAGWLFVSTGLAYDVFGSPRPNEYFTESRQGIPLITDRFDSLEQLDEFSRSF</sequence>